<accession>P95958</accession>
<name>Y103_SACS2</name>
<feature type="chain" id="PRO_0000156802" description="Protein SSO0103">
    <location>
        <begin position="1"/>
        <end position="272"/>
    </location>
</feature>
<evidence type="ECO:0000255" key="1">
    <source>
        <dbReference type="HAMAP-Rule" id="MF_00226"/>
    </source>
</evidence>
<protein>
    <recommendedName>
        <fullName evidence="1">Protein SSO0103</fullName>
    </recommendedName>
</protein>
<gene>
    <name type="ordered locus">SSO0103</name>
    <name type="ORF">C04019</name>
</gene>
<sequence length="272" mass="30906">MVSIVNIFMDYWFAEIITIGNEVLSGKTVNTNASHIGRRLTSLGFTVRRITAVMDEVDEIASAFREAIDRKPRVIVSSGGLGPTWDDKTAEGLAKALGVNLELNKTAFDMILEKYMTRKIPITEERKKMAYMPYGAIPVENNEGIAPGIYVYHNNIDILATPGVPREMENVLENFINKMLRNRSNLKYLEDFIYVENVMESSLAPYVKELVKKYDIYIKTHPKSYEMSHPILEIQIAGSGKQEEEIKVKIEKVKFELLDAIKKLNGIIRNSL</sequence>
<reference key="1">
    <citation type="journal article" date="1996" name="Mol. Microbiol.">
        <title>Organizational characteristics and information content of an archaeal genome: 156 kb of sequence from Sulfolobus solfataricus P2.</title>
        <authorList>
            <person name="Sensen C.W."/>
            <person name="Klenk H.-P."/>
            <person name="Singh R.K."/>
            <person name="Allard G."/>
            <person name="Chan C.C.-Y."/>
            <person name="Liu Q.Y."/>
            <person name="Penny S.L."/>
            <person name="Young F."/>
            <person name="Schenk M.E."/>
            <person name="Gaasterland T."/>
            <person name="Doolittle W.F."/>
            <person name="Ragan M.A."/>
            <person name="Charlebois R.L."/>
        </authorList>
    </citation>
    <scope>NUCLEOTIDE SEQUENCE [GENOMIC DNA]</scope>
    <source>
        <strain>ATCC 35092 / DSM 1617 / JCM 11322 / P2</strain>
    </source>
</reference>
<reference key="2">
    <citation type="journal article" date="2001" name="Proc. Natl. Acad. Sci. U.S.A.">
        <title>The complete genome of the crenarchaeon Sulfolobus solfataricus P2.</title>
        <authorList>
            <person name="She Q."/>
            <person name="Singh R.K."/>
            <person name="Confalonieri F."/>
            <person name="Zivanovic Y."/>
            <person name="Allard G."/>
            <person name="Awayez M.J."/>
            <person name="Chan-Weiher C.C.-Y."/>
            <person name="Clausen I.G."/>
            <person name="Curtis B.A."/>
            <person name="De Moors A."/>
            <person name="Erauso G."/>
            <person name="Fletcher C."/>
            <person name="Gordon P.M.K."/>
            <person name="Heikamp-de Jong I."/>
            <person name="Jeffries A.C."/>
            <person name="Kozera C.J."/>
            <person name="Medina N."/>
            <person name="Peng X."/>
            <person name="Thi-Ngoc H.P."/>
            <person name="Redder P."/>
            <person name="Schenk M.E."/>
            <person name="Theriault C."/>
            <person name="Tolstrup N."/>
            <person name="Charlebois R.L."/>
            <person name="Doolittle W.F."/>
            <person name="Duguet M."/>
            <person name="Gaasterland T."/>
            <person name="Garrett R.A."/>
            <person name="Ragan M.A."/>
            <person name="Sensen C.W."/>
            <person name="Van der Oost J."/>
        </authorList>
    </citation>
    <scope>NUCLEOTIDE SEQUENCE [LARGE SCALE GENOMIC DNA]</scope>
    <source>
        <strain>ATCC 35092 / DSM 1617 / JCM 11322 / P2</strain>
    </source>
</reference>
<dbReference type="EMBL" id="Y08257">
    <property type="protein sequence ID" value="CAA69548.1"/>
    <property type="molecule type" value="Genomic_DNA"/>
</dbReference>
<dbReference type="EMBL" id="AE006641">
    <property type="protein sequence ID" value="AAK40459.1"/>
    <property type="molecule type" value="Genomic_DNA"/>
</dbReference>
<dbReference type="PIR" id="S75386">
    <property type="entry name" value="S75386"/>
</dbReference>
<dbReference type="SMR" id="P95958"/>
<dbReference type="FunCoup" id="P95958">
    <property type="interactions" value="7"/>
</dbReference>
<dbReference type="STRING" id="273057.SSO0103"/>
<dbReference type="PaxDb" id="273057-SSO0103"/>
<dbReference type="EnsemblBacteria" id="AAK40459">
    <property type="protein sequence ID" value="AAK40459"/>
    <property type="gene ID" value="SSO0103"/>
</dbReference>
<dbReference type="KEGG" id="sso:SSO0103"/>
<dbReference type="PATRIC" id="fig|273057.12.peg.100"/>
<dbReference type="eggNOG" id="arCOG00215">
    <property type="taxonomic scope" value="Archaea"/>
</dbReference>
<dbReference type="HOGENOM" id="CLU_030805_0_5_2"/>
<dbReference type="InParanoid" id="P95958"/>
<dbReference type="PhylomeDB" id="P95958"/>
<dbReference type="Proteomes" id="UP000001974">
    <property type="component" value="Chromosome"/>
</dbReference>
<dbReference type="CDD" id="cd00885">
    <property type="entry name" value="cinA"/>
    <property type="match status" value="1"/>
</dbReference>
<dbReference type="Gene3D" id="3.40.980.10">
    <property type="entry name" value="MoaB/Mog-like domain"/>
    <property type="match status" value="1"/>
</dbReference>
<dbReference type="HAMAP" id="MF_00226_A">
    <property type="entry name" value="CinA_A"/>
    <property type="match status" value="1"/>
</dbReference>
<dbReference type="InterPro" id="IPR050101">
    <property type="entry name" value="CinA"/>
</dbReference>
<dbReference type="InterPro" id="IPR023055">
    <property type="entry name" value="CinA_Arc"/>
</dbReference>
<dbReference type="InterPro" id="IPR036425">
    <property type="entry name" value="MoaB/Mog-like_dom_sf"/>
</dbReference>
<dbReference type="InterPro" id="IPR001453">
    <property type="entry name" value="MoaB/Mog_dom"/>
</dbReference>
<dbReference type="NCBIfam" id="NF002291">
    <property type="entry name" value="PRK01215.1"/>
    <property type="match status" value="1"/>
</dbReference>
<dbReference type="PANTHER" id="PTHR13939">
    <property type="entry name" value="NICOTINAMIDE-NUCLEOTIDE AMIDOHYDROLASE PNCC"/>
    <property type="match status" value="1"/>
</dbReference>
<dbReference type="PANTHER" id="PTHR13939:SF0">
    <property type="entry name" value="NMN AMIDOHYDROLASE-LIKE PROTEIN YFAY"/>
    <property type="match status" value="1"/>
</dbReference>
<dbReference type="Pfam" id="PF00994">
    <property type="entry name" value="MoCF_biosynth"/>
    <property type="match status" value="1"/>
</dbReference>
<dbReference type="SMART" id="SM00852">
    <property type="entry name" value="MoCF_biosynth"/>
    <property type="match status" value="1"/>
</dbReference>
<dbReference type="SUPFAM" id="SSF53218">
    <property type="entry name" value="Molybdenum cofactor biosynthesis proteins"/>
    <property type="match status" value="1"/>
</dbReference>
<organism>
    <name type="scientific">Saccharolobus solfataricus (strain ATCC 35092 / DSM 1617 / JCM 11322 / P2)</name>
    <name type="common">Sulfolobus solfataricus</name>
    <dbReference type="NCBI Taxonomy" id="273057"/>
    <lineage>
        <taxon>Archaea</taxon>
        <taxon>Thermoproteota</taxon>
        <taxon>Thermoprotei</taxon>
        <taxon>Sulfolobales</taxon>
        <taxon>Sulfolobaceae</taxon>
        <taxon>Saccharolobus</taxon>
    </lineage>
</organism>
<keyword id="KW-1185">Reference proteome</keyword>
<comment type="similarity">
    <text evidence="1">Belongs to the CinA family.</text>
</comment>
<proteinExistence type="inferred from homology"/>